<proteinExistence type="inferred from homology"/>
<sequence length="261" mass="29393">MLLLLSPAKSLDYDTPLPPKLPHTLPVFSEQPLELIEVLRRQSPQQLSELMGISDKLAALNVARYEAFSPRFTATNARQALLAFNGDVYEGLQARSLDAEDLDWAQQHLAILSGLYGVLRPLDRMQPYRLEMGTRLETAHGSNLYQFWGSRIAEHLNQRAARQPAGERVIVNLASQEYFKSVDLKHLKPPVVECAFEDYKNGAYKIISFHAKRARGLMARFAIQRRARSAAELEAFDLEGYALAPASSTPARLVFRRKTAD</sequence>
<dbReference type="EMBL" id="CP000884">
    <property type="protein sequence ID" value="ABX37912.1"/>
    <property type="molecule type" value="Genomic_DNA"/>
</dbReference>
<dbReference type="SMR" id="A9BNL7"/>
<dbReference type="STRING" id="398578.Daci_5283"/>
<dbReference type="GeneID" id="24117881"/>
<dbReference type="KEGG" id="dac:Daci_5283"/>
<dbReference type="eggNOG" id="COG3022">
    <property type="taxonomic scope" value="Bacteria"/>
</dbReference>
<dbReference type="HOGENOM" id="CLU_061989_0_0_4"/>
<dbReference type="Proteomes" id="UP000000784">
    <property type="component" value="Chromosome"/>
</dbReference>
<dbReference type="GO" id="GO:0005829">
    <property type="term" value="C:cytosol"/>
    <property type="evidence" value="ECO:0007669"/>
    <property type="project" value="TreeGrafter"/>
</dbReference>
<dbReference type="GO" id="GO:0033194">
    <property type="term" value="P:response to hydroperoxide"/>
    <property type="evidence" value="ECO:0007669"/>
    <property type="project" value="TreeGrafter"/>
</dbReference>
<dbReference type="HAMAP" id="MF_00652">
    <property type="entry name" value="UPF0246"/>
    <property type="match status" value="1"/>
</dbReference>
<dbReference type="InterPro" id="IPR005583">
    <property type="entry name" value="YaaA"/>
</dbReference>
<dbReference type="NCBIfam" id="NF002542">
    <property type="entry name" value="PRK02101.1-3"/>
    <property type="match status" value="1"/>
</dbReference>
<dbReference type="PANTHER" id="PTHR30283:SF4">
    <property type="entry name" value="PEROXIDE STRESS RESISTANCE PROTEIN YAAA"/>
    <property type="match status" value="1"/>
</dbReference>
<dbReference type="PANTHER" id="PTHR30283">
    <property type="entry name" value="PEROXIDE STRESS RESPONSE PROTEIN YAAA"/>
    <property type="match status" value="1"/>
</dbReference>
<dbReference type="Pfam" id="PF03883">
    <property type="entry name" value="H2O2_YaaD"/>
    <property type="match status" value="1"/>
</dbReference>
<gene>
    <name type="ordered locus">Daci_5283</name>
</gene>
<comment type="similarity">
    <text evidence="1">Belongs to the UPF0246 family.</text>
</comment>
<keyword id="KW-1185">Reference proteome</keyword>
<protein>
    <recommendedName>
        <fullName evidence="1">UPF0246 protein Daci_5283</fullName>
    </recommendedName>
</protein>
<name>Y5283_DELAS</name>
<organism>
    <name type="scientific">Delftia acidovorans (strain DSM 14801 / SPH-1)</name>
    <dbReference type="NCBI Taxonomy" id="398578"/>
    <lineage>
        <taxon>Bacteria</taxon>
        <taxon>Pseudomonadati</taxon>
        <taxon>Pseudomonadota</taxon>
        <taxon>Betaproteobacteria</taxon>
        <taxon>Burkholderiales</taxon>
        <taxon>Comamonadaceae</taxon>
        <taxon>Delftia</taxon>
    </lineage>
</organism>
<evidence type="ECO:0000255" key="1">
    <source>
        <dbReference type="HAMAP-Rule" id="MF_00652"/>
    </source>
</evidence>
<accession>A9BNL7</accession>
<feature type="chain" id="PRO_1000131110" description="UPF0246 protein Daci_5283">
    <location>
        <begin position="1"/>
        <end position="261"/>
    </location>
</feature>
<reference key="1">
    <citation type="submission" date="2007-11" db="EMBL/GenBank/DDBJ databases">
        <title>Complete sequence of Delftia acidovorans DSM 14801 / SPH-1.</title>
        <authorList>
            <person name="Copeland A."/>
            <person name="Lucas S."/>
            <person name="Lapidus A."/>
            <person name="Barry K."/>
            <person name="Glavina del Rio T."/>
            <person name="Dalin E."/>
            <person name="Tice H."/>
            <person name="Pitluck S."/>
            <person name="Lowry S."/>
            <person name="Clum A."/>
            <person name="Schmutz J."/>
            <person name="Larimer F."/>
            <person name="Land M."/>
            <person name="Hauser L."/>
            <person name="Kyrpides N."/>
            <person name="Kim E."/>
            <person name="Schleheck D."/>
            <person name="Richardson P."/>
        </authorList>
    </citation>
    <scope>NUCLEOTIDE SEQUENCE [LARGE SCALE GENOMIC DNA]</scope>
    <source>
        <strain>DSM 14801 / SPH-1</strain>
    </source>
</reference>